<evidence type="ECO:0000255" key="1">
    <source>
        <dbReference type="HAMAP-Rule" id="MF_00201"/>
    </source>
</evidence>
<gene>
    <name evidence="1" type="primary">recO</name>
    <name type="ordered locus">Rxyl_1504</name>
</gene>
<comment type="function">
    <text evidence="1">Involved in DNA repair and RecF pathway recombination.</text>
</comment>
<comment type="similarity">
    <text evidence="1">Belongs to the RecO family.</text>
</comment>
<accession>Q1AVW2</accession>
<keyword id="KW-0227">DNA damage</keyword>
<keyword id="KW-0233">DNA recombination</keyword>
<keyword id="KW-0234">DNA repair</keyword>
<keyword id="KW-1185">Reference proteome</keyword>
<protein>
    <recommendedName>
        <fullName evidence="1">DNA repair protein RecO</fullName>
    </recommendedName>
    <alternativeName>
        <fullName evidence="1">Recombination protein O</fullName>
    </alternativeName>
</protein>
<dbReference type="EMBL" id="CP000386">
    <property type="protein sequence ID" value="ABG04466.1"/>
    <property type="molecule type" value="Genomic_DNA"/>
</dbReference>
<dbReference type="RefSeq" id="WP_011564483.1">
    <property type="nucleotide sequence ID" value="NC_008148.1"/>
</dbReference>
<dbReference type="SMR" id="Q1AVW2"/>
<dbReference type="STRING" id="266117.Rxyl_1504"/>
<dbReference type="KEGG" id="rxy:Rxyl_1504"/>
<dbReference type="eggNOG" id="COG1381">
    <property type="taxonomic scope" value="Bacteria"/>
</dbReference>
<dbReference type="HOGENOM" id="CLU_066632_1_1_11"/>
<dbReference type="OrthoDB" id="9812244at2"/>
<dbReference type="PhylomeDB" id="Q1AVW2"/>
<dbReference type="Proteomes" id="UP000006637">
    <property type="component" value="Chromosome"/>
</dbReference>
<dbReference type="GO" id="GO:0043590">
    <property type="term" value="C:bacterial nucleoid"/>
    <property type="evidence" value="ECO:0007669"/>
    <property type="project" value="TreeGrafter"/>
</dbReference>
<dbReference type="GO" id="GO:0006310">
    <property type="term" value="P:DNA recombination"/>
    <property type="evidence" value="ECO:0007669"/>
    <property type="project" value="UniProtKB-UniRule"/>
</dbReference>
<dbReference type="GO" id="GO:0006302">
    <property type="term" value="P:double-strand break repair"/>
    <property type="evidence" value="ECO:0007669"/>
    <property type="project" value="TreeGrafter"/>
</dbReference>
<dbReference type="Gene3D" id="2.40.50.140">
    <property type="entry name" value="Nucleic acid-binding proteins"/>
    <property type="match status" value="1"/>
</dbReference>
<dbReference type="Gene3D" id="1.20.1440.120">
    <property type="entry name" value="Recombination protein O, C-terminal domain"/>
    <property type="match status" value="1"/>
</dbReference>
<dbReference type="HAMAP" id="MF_00201">
    <property type="entry name" value="RecO"/>
    <property type="match status" value="1"/>
</dbReference>
<dbReference type="InterPro" id="IPR037278">
    <property type="entry name" value="ARFGAP/RecO"/>
</dbReference>
<dbReference type="InterPro" id="IPR022572">
    <property type="entry name" value="DNA_rep/recomb_RecO_N"/>
</dbReference>
<dbReference type="InterPro" id="IPR012340">
    <property type="entry name" value="NA-bd_OB-fold"/>
</dbReference>
<dbReference type="InterPro" id="IPR003717">
    <property type="entry name" value="RecO"/>
</dbReference>
<dbReference type="InterPro" id="IPR042242">
    <property type="entry name" value="RecO_C"/>
</dbReference>
<dbReference type="NCBIfam" id="TIGR00613">
    <property type="entry name" value="reco"/>
    <property type="match status" value="1"/>
</dbReference>
<dbReference type="PANTHER" id="PTHR33991">
    <property type="entry name" value="DNA REPAIR PROTEIN RECO"/>
    <property type="match status" value="1"/>
</dbReference>
<dbReference type="PANTHER" id="PTHR33991:SF1">
    <property type="entry name" value="DNA REPAIR PROTEIN RECO"/>
    <property type="match status" value="1"/>
</dbReference>
<dbReference type="Pfam" id="PF02565">
    <property type="entry name" value="RecO_C"/>
    <property type="match status" value="1"/>
</dbReference>
<dbReference type="Pfam" id="PF11967">
    <property type="entry name" value="RecO_N"/>
    <property type="match status" value="1"/>
</dbReference>
<dbReference type="SUPFAM" id="SSF57863">
    <property type="entry name" value="ArfGap/RecO-like zinc finger"/>
    <property type="match status" value="1"/>
</dbReference>
<dbReference type="SUPFAM" id="SSF50249">
    <property type="entry name" value="Nucleic acid-binding proteins"/>
    <property type="match status" value="1"/>
</dbReference>
<name>RECO_RUBXD</name>
<sequence>MALYRSRGIVLRSIRYGEADRILDIYTRDAGLVSCIAKGIRRTRSRFGARLEPFSCVDFMAYRGRTLDTITQAESLRSFRGVRERLDRLQAAAGMAGVLHALSGGTPDRRTFNLLYRALDALEKGEEGFGMIEASFGLKLAVLSGYAPRLDGCAECGGDVPGEGARFAPAAGGFLCRDCRSDAPPDSFPVPPGTLGRLRELAALPLAEAASGRGLEEALRRVVRAHVLAHAPGAASLATPAGTAGGRP</sequence>
<organism>
    <name type="scientific">Rubrobacter xylanophilus (strain DSM 9941 / JCM 11954 / NBRC 16129 / PRD-1)</name>
    <dbReference type="NCBI Taxonomy" id="266117"/>
    <lineage>
        <taxon>Bacteria</taxon>
        <taxon>Bacillati</taxon>
        <taxon>Actinomycetota</taxon>
        <taxon>Rubrobacteria</taxon>
        <taxon>Rubrobacterales</taxon>
        <taxon>Rubrobacteraceae</taxon>
        <taxon>Rubrobacter</taxon>
    </lineage>
</organism>
<feature type="chain" id="PRO_1000012154" description="DNA repair protein RecO">
    <location>
        <begin position="1"/>
        <end position="248"/>
    </location>
</feature>
<reference key="1">
    <citation type="submission" date="2006-06" db="EMBL/GenBank/DDBJ databases">
        <title>Complete sequence of Rubrobacter xylanophilus DSM 9941.</title>
        <authorList>
            <consortium name="US DOE Joint Genome Institute"/>
            <person name="Copeland A."/>
            <person name="Lucas S."/>
            <person name="Lapidus A."/>
            <person name="Barry K."/>
            <person name="Detter J.C."/>
            <person name="Glavina del Rio T."/>
            <person name="Hammon N."/>
            <person name="Israni S."/>
            <person name="Dalin E."/>
            <person name="Tice H."/>
            <person name="Pitluck S."/>
            <person name="Munk A.C."/>
            <person name="Brettin T."/>
            <person name="Bruce D."/>
            <person name="Han C."/>
            <person name="Tapia R."/>
            <person name="Gilna P."/>
            <person name="Schmutz J."/>
            <person name="Larimer F."/>
            <person name="Land M."/>
            <person name="Hauser L."/>
            <person name="Kyrpides N."/>
            <person name="Lykidis A."/>
            <person name="da Costa M.S."/>
            <person name="Rainey F.A."/>
            <person name="Empadinhas N."/>
            <person name="Jolivet E."/>
            <person name="Battista J.R."/>
            <person name="Richardson P."/>
        </authorList>
    </citation>
    <scope>NUCLEOTIDE SEQUENCE [LARGE SCALE GENOMIC DNA]</scope>
    <source>
        <strain>DSM 9941 / JCM 11954 / NBRC 16129 / PRD-1</strain>
    </source>
</reference>
<proteinExistence type="inferred from homology"/>